<name>UREE_STAAM</name>
<proteinExistence type="inferred from homology"/>
<keyword id="KW-0143">Chaperone</keyword>
<keyword id="KW-0963">Cytoplasm</keyword>
<keyword id="KW-0533">Nickel</keyword>
<keyword id="KW-0996">Nickel insertion</keyword>
<accession>Q99RY1</accession>
<organism>
    <name type="scientific">Staphylococcus aureus (strain Mu50 / ATCC 700699)</name>
    <dbReference type="NCBI Taxonomy" id="158878"/>
    <lineage>
        <taxon>Bacteria</taxon>
        <taxon>Bacillati</taxon>
        <taxon>Bacillota</taxon>
        <taxon>Bacilli</taxon>
        <taxon>Bacillales</taxon>
        <taxon>Staphylococcaceae</taxon>
        <taxon>Staphylococcus</taxon>
    </lineage>
</organism>
<dbReference type="EMBL" id="BA000017">
    <property type="protein sequence ID" value="BAB58453.1"/>
    <property type="molecule type" value="Genomic_DNA"/>
</dbReference>
<dbReference type="RefSeq" id="WP_000634589.1">
    <property type="nucleotide sequence ID" value="NC_002758.2"/>
</dbReference>
<dbReference type="SMR" id="Q99RY1"/>
<dbReference type="KEGG" id="sav:SAV2291"/>
<dbReference type="HOGENOM" id="CLU_093757_3_1_9"/>
<dbReference type="PhylomeDB" id="Q99RY1"/>
<dbReference type="Proteomes" id="UP000002481">
    <property type="component" value="Chromosome"/>
</dbReference>
<dbReference type="GO" id="GO:0005737">
    <property type="term" value="C:cytoplasm"/>
    <property type="evidence" value="ECO:0007669"/>
    <property type="project" value="UniProtKB-SubCell"/>
</dbReference>
<dbReference type="GO" id="GO:0016151">
    <property type="term" value="F:nickel cation binding"/>
    <property type="evidence" value="ECO:0007669"/>
    <property type="project" value="UniProtKB-UniRule"/>
</dbReference>
<dbReference type="GO" id="GO:0051082">
    <property type="term" value="F:unfolded protein binding"/>
    <property type="evidence" value="ECO:0007669"/>
    <property type="project" value="UniProtKB-UniRule"/>
</dbReference>
<dbReference type="GO" id="GO:0006457">
    <property type="term" value="P:protein folding"/>
    <property type="evidence" value="ECO:0007669"/>
    <property type="project" value="InterPro"/>
</dbReference>
<dbReference type="GO" id="GO:0065003">
    <property type="term" value="P:protein-containing complex assembly"/>
    <property type="evidence" value="ECO:0007669"/>
    <property type="project" value="InterPro"/>
</dbReference>
<dbReference type="GO" id="GO:0019627">
    <property type="term" value="P:urea metabolic process"/>
    <property type="evidence" value="ECO:0007669"/>
    <property type="project" value="InterPro"/>
</dbReference>
<dbReference type="CDD" id="cd00571">
    <property type="entry name" value="UreE"/>
    <property type="match status" value="1"/>
</dbReference>
<dbReference type="Gene3D" id="2.60.260.20">
    <property type="entry name" value="Urease metallochaperone UreE, N-terminal domain"/>
    <property type="match status" value="1"/>
</dbReference>
<dbReference type="Gene3D" id="3.30.70.790">
    <property type="entry name" value="UreE, C-terminal domain"/>
    <property type="match status" value="1"/>
</dbReference>
<dbReference type="HAMAP" id="MF_00822">
    <property type="entry name" value="UreE"/>
    <property type="match status" value="1"/>
</dbReference>
<dbReference type="InterPro" id="IPR012406">
    <property type="entry name" value="UreE"/>
</dbReference>
<dbReference type="InterPro" id="IPR007864">
    <property type="entry name" value="UreE_C_dom"/>
</dbReference>
<dbReference type="InterPro" id="IPR004029">
    <property type="entry name" value="UreE_N"/>
</dbReference>
<dbReference type="InterPro" id="IPR036118">
    <property type="entry name" value="UreE_N_sf"/>
</dbReference>
<dbReference type="NCBIfam" id="NF009755">
    <property type="entry name" value="PRK13261.2-1"/>
    <property type="match status" value="1"/>
</dbReference>
<dbReference type="Pfam" id="PF05194">
    <property type="entry name" value="UreE_C"/>
    <property type="match status" value="1"/>
</dbReference>
<dbReference type="Pfam" id="PF02814">
    <property type="entry name" value="UreE_N"/>
    <property type="match status" value="1"/>
</dbReference>
<dbReference type="PIRSF" id="PIRSF036402">
    <property type="entry name" value="Ureas_acces_UreE"/>
    <property type="match status" value="1"/>
</dbReference>
<dbReference type="SMART" id="SM00988">
    <property type="entry name" value="UreE_N"/>
    <property type="match status" value="1"/>
</dbReference>
<dbReference type="SUPFAM" id="SSF69737">
    <property type="entry name" value="Urease metallochaperone UreE, C-terminal domain"/>
    <property type="match status" value="1"/>
</dbReference>
<dbReference type="SUPFAM" id="SSF69287">
    <property type="entry name" value="Urease metallochaperone UreE, N-terminal domain"/>
    <property type="match status" value="1"/>
</dbReference>
<gene>
    <name evidence="1" type="primary">ureE</name>
    <name type="ordered locus">SAV2291</name>
</gene>
<feature type="chain" id="PRO_0000223440" description="Urease accessory protein UreE">
    <location>
        <begin position="1"/>
        <end position="150"/>
    </location>
</feature>
<evidence type="ECO:0000255" key="1">
    <source>
        <dbReference type="HAMAP-Rule" id="MF_00822"/>
    </source>
</evidence>
<sequence length="150" mass="17340">MIVEEIQGNIANLSNSEKQKHVEKVYLENSDLVKRIQRVVTDHGTEIGIRLKQPIDLQYGDILYADDHNMIIVDVNSEDLLVIQPRTLQEMGDIAHQLGNRHLPAQFTETEMLVQYDYLVEDLLKSLGIPYVREDRKVNKAFRHIGHSHD</sequence>
<protein>
    <recommendedName>
        <fullName evidence="1">Urease accessory protein UreE</fullName>
    </recommendedName>
</protein>
<comment type="function">
    <text evidence="1">Involved in urease metallocenter assembly. Binds nickel. Probably functions as a nickel donor during metallocenter assembly.</text>
</comment>
<comment type="subcellular location">
    <subcellularLocation>
        <location evidence="1">Cytoplasm</location>
    </subcellularLocation>
</comment>
<comment type="similarity">
    <text evidence="1">Belongs to the UreE family.</text>
</comment>
<reference key="1">
    <citation type="journal article" date="2001" name="Lancet">
        <title>Whole genome sequencing of meticillin-resistant Staphylococcus aureus.</title>
        <authorList>
            <person name="Kuroda M."/>
            <person name="Ohta T."/>
            <person name="Uchiyama I."/>
            <person name="Baba T."/>
            <person name="Yuzawa H."/>
            <person name="Kobayashi I."/>
            <person name="Cui L."/>
            <person name="Oguchi A."/>
            <person name="Aoki K."/>
            <person name="Nagai Y."/>
            <person name="Lian J.-Q."/>
            <person name="Ito T."/>
            <person name="Kanamori M."/>
            <person name="Matsumaru H."/>
            <person name="Maruyama A."/>
            <person name="Murakami H."/>
            <person name="Hosoyama A."/>
            <person name="Mizutani-Ui Y."/>
            <person name="Takahashi N.K."/>
            <person name="Sawano T."/>
            <person name="Inoue R."/>
            <person name="Kaito C."/>
            <person name="Sekimizu K."/>
            <person name="Hirakawa H."/>
            <person name="Kuhara S."/>
            <person name="Goto S."/>
            <person name="Yabuzaki J."/>
            <person name="Kanehisa M."/>
            <person name="Yamashita A."/>
            <person name="Oshima K."/>
            <person name="Furuya K."/>
            <person name="Yoshino C."/>
            <person name="Shiba T."/>
            <person name="Hattori M."/>
            <person name="Ogasawara N."/>
            <person name="Hayashi H."/>
            <person name="Hiramatsu K."/>
        </authorList>
    </citation>
    <scope>NUCLEOTIDE SEQUENCE [LARGE SCALE GENOMIC DNA]</scope>
    <source>
        <strain>Mu50 / ATCC 700699</strain>
    </source>
</reference>